<gene>
    <name evidence="1" type="primary">rplW</name>
    <name type="ordered locus">Mvan_1307</name>
</gene>
<proteinExistence type="inferred from homology"/>
<protein>
    <recommendedName>
        <fullName evidence="1">Large ribosomal subunit protein uL23</fullName>
    </recommendedName>
    <alternativeName>
        <fullName evidence="2">50S ribosomal protein L23</fullName>
    </alternativeName>
</protein>
<feature type="chain" id="PRO_1000068119" description="Large ribosomal subunit protein uL23">
    <location>
        <begin position="1"/>
        <end position="100"/>
    </location>
</feature>
<reference key="1">
    <citation type="submission" date="2006-12" db="EMBL/GenBank/DDBJ databases">
        <title>Complete sequence of Mycobacterium vanbaalenii PYR-1.</title>
        <authorList>
            <consortium name="US DOE Joint Genome Institute"/>
            <person name="Copeland A."/>
            <person name="Lucas S."/>
            <person name="Lapidus A."/>
            <person name="Barry K."/>
            <person name="Detter J.C."/>
            <person name="Glavina del Rio T."/>
            <person name="Hammon N."/>
            <person name="Israni S."/>
            <person name="Dalin E."/>
            <person name="Tice H."/>
            <person name="Pitluck S."/>
            <person name="Singan V."/>
            <person name="Schmutz J."/>
            <person name="Larimer F."/>
            <person name="Land M."/>
            <person name="Hauser L."/>
            <person name="Kyrpides N."/>
            <person name="Anderson I.J."/>
            <person name="Miller C."/>
            <person name="Richardson P."/>
        </authorList>
    </citation>
    <scope>NUCLEOTIDE SEQUENCE [LARGE SCALE GENOMIC DNA]</scope>
    <source>
        <strain>DSM 7251 / JCM 13017 / BCRC 16820 / KCTC 9966 / NRRL B-24157 / PYR-1</strain>
    </source>
</reference>
<accession>A1T4P1</accession>
<dbReference type="EMBL" id="CP000511">
    <property type="protein sequence ID" value="ABM12141.1"/>
    <property type="molecule type" value="Genomic_DNA"/>
</dbReference>
<dbReference type="RefSeq" id="WP_011778572.1">
    <property type="nucleotide sequence ID" value="NZ_JACKSD010000069.1"/>
</dbReference>
<dbReference type="SMR" id="A1T4P1"/>
<dbReference type="STRING" id="350058.Mvan_1307"/>
<dbReference type="KEGG" id="mva:Mvan_1307"/>
<dbReference type="eggNOG" id="COG0089">
    <property type="taxonomic scope" value="Bacteria"/>
</dbReference>
<dbReference type="HOGENOM" id="CLU_037562_3_2_11"/>
<dbReference type="Proteomes" id="UP000009159">
    <property type="component" value="Chromosome"/>
</dbReference>
<dbReference type="GO" id="GO:1990904">
    <property type="term" value="C:ribonucleoprotein complex"/>
    <property type="evidence" value="ECO:0007669"/>
    <property type="project" value="UniProtKB-KW"/>
</dbReference>
<dbReference type="GO" id="GO:0005840">
    <property type="term" value="C:ribosome"/>
    <property type="evidence" value="ECO:0007669"/>
    <property type="project" value="UniProtKB-KW"/>
</dbReference>
<dbReference type="GO" id="GO:0019843">
    <property type="term" value="F:rRNA binding"/>
    <property type="evidence" value="ECO:0007669"/>
    <property type="project" value="UniProtKB-UniRule"/>
</dbReference>
<dbReference type="GO" id="GO:0003735">
    <property type="term" value="F:structural constituent of ribosome"/>
    <property type="evidence" value="ECO:0007669"/>
    <property type="project" value="InterPro"/>
</dbReference>
<dbReference type="GO" id="GO:0006412">
    <property type="term" value="P:translation"/>
    <property type="evidence" value="ECO:0007669"/>
    <property type="project" value="UniProtKB-UniRule"/>
</dbReference>
<dbReference type="FunFam" id="3.30.70.330:FF:000001">
    <property type="entry name" value="50S ribosomal protein L23"/>
    <property type="match status" value="1"/>
</dbReference>
<dbReference type="Gene3D" id="3.30.70.330">
    <property type="match status" value="1"/>
</dbReference>
<dbReference type="HAMAP" id="MF_01369_B">
    <property type="entry name" value="Ribosomal_uL23_B"/>
    <property type="match status" value="1"/>
</dbReference>
<dbReference type="InterPro" id="IPR012677">
    <property type="entry name" value="Nucleotide-bd_a/b_plait_sf"/>
</dbReference>
<dbReference type="InterPro" id="IPR013025">
    <property type="entry name" value="Ribosomal_uL23-like"/>
</dbReference>
<dbReference type="InterPro" id="IPR012678">
    <property type="entry name" value="Ribosomal_uL23/eL15/eS24_sf"/>
</dbReference>
<dbReference type="InterPro" id="IPR001014">
    <property type="entry name" value="Ribosomal_uL23_CS"/>
</dbReference>
<dbReference type="NCBIfam" id="NF004363">
    <property type="entry name" value="PRK05738.2-4"/>
    <property type="match status" value="1"/>
</dbReference>
<dbReference type="NCBIfam" id="NF004364">
    <property type="entry name" value="PRK05738.2-5"/>
    <property type="match status" value="1"/>
</dbReference>
<dbReference type="PANTHER" id="PTHR11620">
    <property type="entry name" value="60S RIBOSOMAL PROTEIN L23A"/>
    <property type="match status" value="1"/>
</dbReference>
<dbReference type="Pfam" id="PF00276">
    <property type="entry name" value="Ribosomal_L23"/>
    <property type="match status" value="1"/>
</dbReference>
<dbReference type="SUPFAM" id="SSF54189">
    <property type="entry name" value="Ribosomal proteins S24e, L23 and L15e"/>
    <property type="match status" value="1"/>
</dbReference>
<dbReference type="PROSITE" id="PS00050">
    <property type="entry name" value="RIBOSOMAL_L23"/>
    <property type="match status" value="1"/>
</dbReference>
<keyword id="KW-0687">Ribonucleoprotein</keyword>
<keyword id="KW-0689">Ribosomal protein</keyword>
<keyword id="KW-0694">RNA-binding</keyword>
<keyword id="KW-0699">rRNA-binding</keyword>
<comment type="function">
    <text evidence="1">One of the early assembly proteins it binds 23S rRNA. One of the proteins that surrounds the polypeptide exit tunnel on the outside of the ribosome. Forms the main docking site for trigger factor binding to the ribosome.</text>
</comment>
<comment type="subunit">
    <text evidence="1">Part of the 50S ribosomal subunit. Contacts protein L29, and trigger factor when it is bound to the ribosome.</text>
</comment>
<comment type="similarity">
    <text evidence="1">Belongs to the universal ribosomal protein uL23 family.</text>
</comment>
<organism>
    <name type="scientific">Mycolicibacterium vanbaalenii (strain DSM 7251 / JCM 13017 / BCRC 16820 / KCTC 9966 / NRRL B-24157 / PYR-1)</name>
    <name type="common">Mycobacterium vanbaalenii</name>
    <dbReference type="NCBI Taxonomy" id="350058"/>
    <lineage>
        <taxon>Bacteria</taxon>
        <taxon>Bacillati</taxon>
        <taxon>Actinomycetota</taxon>
        <taxon>Actinomycetes</taxon>
        <taxon>Mycobacteriales</taxon>
        <taxon>Mycobacteriaceae</taxon>
        <taxon>Mycolicibacterium</taxon>
    </lineage>
</organism>
<name>RL23_MYCVP</name>
<evidence type="ECO:0000255" key="1">
    <source>
        <dbReference type="HAMAP-Rule" id="MF_01369"/>
    </source>
</evidence>
<evidence type="ECO:0000305" key="2"/>
<sequence length="100" mass="10930">MANVTDPRDIILSPVISEKSYGLIEDNVYTFIVAPDSNKTQIKIAIEKIFKVKVDSVNTANRPGKRKRTRTGFGQRKATKRAIVTLAAGSKPIDLFGAPA</sequence>